<accession>Q8IZK6</accession>
<accession>A6NI99</accession>
<accession>Q2M3I6</accession>
<accession>Q5TAG5</accession>
<accession>Q8N9R3</accession>
<sequence length="566" mass="65942">MARQPYRFPQARIPERGSGVFRLTVRNAMAHRDSEMKEECLREDLKFYFMSPCEKYRARRQIPWKLGLQILKIVMVTTQLVRFGLSNQLVVAFKEDNTVAFKHLFLKGYSGTDEDDYSCSVYTQEDAYESIFFAINQYHQLKDITLGTLGYGENEDNRIGLKVCKQHYKKGTMFPSNETLNIDNDVELDCVQLDLQDLSKKPPDWKNSSFFRLEFYRLLQVEISFHLKGIDLQTIHSRELPDCYVFQNTIIFDNKAHSGKIKIYFDSDAKIEECKDLNIFGSTQKNAQYVLVFDAFVIVICLASLILCTRSIVLALRLRKRFLNFFLEKYKRPVCDTDQWEFINGWYVLVIISDLMTIIGSILKMEIKAKNLTNYDLCSIFLGTSTLLVWVGVIRYLGYFQAYNVLILTMQASLPKVLRFCACAGMIYLGYTFCGWIVLGPYHDKFENLNTVAECLFSLVNGDDMFATFAQIQQKSILVWLFSRLYLYSFISLFIYMILSLFIALITDSYDTIKKFQQNGFPETDLQEFLKECSSKEEYQKESSAFLSCICCRRRKRSDDHLIPIS</sequence>
<organism>
    <name type="scientific">Homo sapiens</name>
    <name type="common">Human</name>
    <dbReference type="NCBI Taxonomy" id="9606"/>
    <lineage>
        <taxon>Eukaryota</taxon>
        <taxon>Metazoa</taxon>
        <taxon>Chordata</taxon>
        <taxon>Craniata</taxon>
        <taxon>Vertebrata</taxon>
        <taxon>Euteleostomi</taxon>
        <taxon>Mammalia</taxon>
        <taxon>Eutheria</taxon>
        <taxon>Euarchontoglires</taxon>
        <taxon>Primates</taxon>
        <taxon>Haplorrhini</taxon>
        <taxon>Catarrhini</taxon>
        <taxon>Hominidae</taxon>
        <taxon>Homo</taxon>
    </lineage>
</organism>
<dbReference type="EMBL" id="AY083533">
    <property type="protein sequence ID" value="AAM08926.1"/>
    <property type="molecule type" value="mRNA"/>
</dbReference>
<dbReference type="EMBL" id="AL139150">
    <property type="status" value="NOT_ANNOTATED_CDS"/>
    <property type="molecule type" value="Genomic_DNA"/>
</dbReference>
<dbReference type="EMBL" id="CH471097">
    <property type="protein sequence ID" value="EAW73221.1"/>
    <property type="molecule type" value="Genomic_DNA"/>
</dbReference>
<dbReference type="EMBL" id="BC104891">
    <property type="protein sequence ID" value="AAI04892.1"/>
    <property type="molecule type" value="mRNA"/>
</dbReference>
<dbReference type="EMBL" id="BC104893">
    <property type="protein sequence ID" value="AAI04894.1"/>
    <property type="molecule type" value="mRNA"/>
</dbReference>
<dbReference type="EMBL" id="AK094010">
    <property type="protein sequence ID" value="BAC04267.1"/>
    <property type="status" value="ALT_SEQ"/>
    <property type="molecule type" value="mRNA"/>
</dbReference>
<dbReference type="CCDS" id="CCDS30762.1">
    <molecule id="Q8IZK6-1"/>
</dbReference>
<dbReference type="CCDS" id="CCDS81347.1">
    <molecule id="Q8IZK6-2"/>
</dbReference>
<dbReference type="RefSeq" id="NP_001317576.1">
    <molecule id="Q8IZK6-2"/>
    <property type="nucleotide sequence ID" value="NM_001330647.2"/>
</dbReference>
<dbReference type="RefSeq" id="NP_694991.2">
    <molecule id="Q8IZK6-1"/>
    <property type="nucleotide sequence ID" value="NM_153259.3"/>
</dbReference>
<dbReference type="RefSeq" id="XP_005270776.1">
    <molecule id="Q8IZK6-2"/>
    <property type="nucleotide sequence ID" value="XM_005270719.4"/>
</dbReference>
<dbReference type="RefSeq" id="XP_011539489.1">
    <molecule id="Q8IZK6-2"/>
    <property type="nucleotide sequence ID" value="XM_011541187.3"/>
</dbReference>
<dbReference type="RefSeq" id="XP_011539490.1">
    <molecule id="Q8IZK6-2"/>
    <property type="nucleotide sequence ID" value="XM_011541188.4"/>
</dbReference>
<dbReference type="RefSeq" id="XP_054191755.1">
    <molecule id="Q8IZK6-2"/>
    <property type="nucleotide sequence ID" value="XM_054335780.1"/>
</dbReference>
<dbReference type="RefSeq" id="XP_054191756.1">
    <molecule id="Q8IZK6-2"/>
    <property type="nucleotide sequence ID" value="XM_054335781.1"/>
</dbReference>
<dbReference type="RefSeq" id="XP_054191757.1">
    <molecule id="Q8IZK6-2"/>
    <property type="nucleotide sequence ID" value="XM_054335782.1"/>
</dbReference>
<dbReference type="PDB" id="6HRR">
    <property type="method" value="X-ray"/>
    <property type="resolution" value="2.00 A"/>
    <property type="chains" value="A/B=92-282"/>
</dbReference>
<dbReference type="PDB" id="6HRS">
    <property type="method" value="X-ray"/>
    <property type="resolution" value="2.95 A"/>
    <property type="chains" value="A/B/C/D/E/F/G/H=86-284"/>
</dbReference>
<dbReference type="PDBsum" id="6HRR"/>
<dbReference type="PDBsum" id="6HRS"/>
<dbReference type="SASBDB" id="Q8IZK6"/>
<dbReference type="SMR" id="Q8IZK6"/>
<dbReference type="BioGRID" id="129087">
    <property type="interactions" value="32"/>
</dbReference>
<dbReference type="FunCoup" id="Q8IZK6">
    <property type="interactions" value="817"/>
</dbReference>
<dbReference type="IntAct" id="Q8IZK6">
    <property type="interactions" value="27"/>
</dbReference>
<dbReference type="STRING" id="9606.ENSP00000359640"/>
<dbReference type="BindingDB" id="Q8IZK6"/>
<dbReference type="ChEMBL" id="CHEMBL4879493"/>
<dbReference type="GuidetoPHARMACOLOGY" id="502"/>
<dbReference type="TCDB" id="1.A.5.3.3">
    <property type="family name" value="the polycystin cation channel (pcc) family"/>
</dbReference>
<dbReference type="iPTMnet" id="Q8IZK6"/>
<dbReference type="PhosphoSitePlus" id="Q8IZK6"/>
<dbReference type="BioMuta" id="MCOLN2"/>
<dbReference type="DMDM" id="212276802"/>
<dbReference type="jPOST" id="Q8IZK6"/>
<dbReference type="MassIVE" id="Q8IZK6"/>
<dbReference type="PaxDb" id="9606-ENSP00000359640"/>
<dbReference type="PeptideAtlas" id="Q8IZK6"/>
<dbReference type="ProteomicsDB" id="71363">
    <molecule id="Q8IZK6-1"/>
</dbReference>
<dbReference type="ProteomicsDB" id="71364">
    <molecule id="Q8IZK6-2"/>
</dbReference>
<dbReference type="Antibodypedia" id="19780">
    <property type="antibodies" value="52 antibodies from 13 providers"/>
</dbReference>
<dbReference type="DNASU" id="255231"/>
<dbReference type="Ensembl" id="ENST00000284027.5">
    <molecule id="Q8IZK6-2"/>
    <property type="protein sequence ID" value="ENSP00000284027.5"/>
    <property type="gene ID" value="ENSG00000153898.13"/>
</dbReference>
<dbReference type="Ensembl" id="ENST00000370608.8">
    <molecule id="Q8IZK6-1"/>
    <property type="protein sequence ID" value="ENSP00000359640.3"/>
    <property type="gene ID" value="ENSG00000153898.13"/>
</dbReference>
<dbReference type="GeneID" id="255231"/>
<dbReference type="KEGG" id="hsa:255231"/>
<dbReference type="MANE-Select" id="ENST00000370608.8">
    <property type="protein sequence ID" value="ENSP00000359640.3"/>
    <property type="RefSeq nucleotide sequence ID" value="NM_153259.4"/>
    <property type="RefSeq protein sequence ID" value="NP_694991.2"/>
</dbReference>
<dbReference type="UCSC" id="uc001dkm.4">
    <molecule id="Q8IZK6-1"/>
    <property type="organism name" value="human"/>
</dbReference>
<dbReference type="AGR" id="HGNC:13357"/>
<dbReference type="CTD" id="255231"/>
<dbReference type="DisGeNET" id="255231"/>
<dbReference type="GeneCards" id="MCOLN2"/>
<dbReference type="HGNC" id="HGNC:13357">
    <property type="gene designation" value="MCOLN2"/>
</dbReference>
<dbReference type="HPA" id="ENSG00000153898">
    <property type="expression patterns" value="Tissue enhanced (adrenal gland, intestine, lymphoid tissue)"/>
</dbReference>
<dbReference type="MIM" id="607399">
    <property type="type" value="gene"/>
</dbReference>
<dbReference type="neXtProt" id="NX_Q8IZK6"/>
<dbReference type="OpenTargets" id="ENSG00000153898"/>
<dbReference type="PharmGKB" id="PA134913691"/>
<dbReference type="VEuPathDB" id="HostDB:ENSG00000153898"/>
<dbReference type="eggNOG" id="KOG3733">
    <property type="taxonomic scope" value="Eukaryota"/>
</dbReference>
<dbReference type="GeneTree" id="ENSGT00950000183036"/>
<dbReference type="HOGENOM" id="CLU_020945_1_1_1"/>
<dbReference type="InParanoid" id="Q8IZK6"/>
<dbReference type="OMA" id="QECKDWN"/>
<dbReference type="OrthoDB" id="263481at2759"/>
<dbReference type="PAN-GO" id="Q8IZK6">
    <property type="GO annotations" value="2 GO annotations based on evolutionary models"/>
</dbReference>
<dbReference type="PhylomeDB" id="Q8IZK6"/>
<dbReference type="TreeFam" id="TF317783"/>
<dbReference type="PathwayCommons" id="Q8IZK6"/>
<dbReference type="Reactome" id="R-HSA-3295583">
    <property type="pathway name" value="TRP channels"/>
</dbReference>
<dbReference type="SignaLink" id="Q8IZK6"/>
<dbReference type="BioGRID-ORCS" id="255231">
    <property type="hits" value="13 hits in 1147 CRISPR screens"/>
</dbReference>
<dbReference type="ChiTaRS" id="MCOLN2">
    <property type="organism name" value="human"/>
</dbReference>
<dbReference type="GeneWiki" id="MCOLN2"/>
<dbReference type="GenomeRNAi" id="255231"/>
<dbReference type="Pharos" id="Q8IZK6">
    <property type="development level" value="Tchem"/>
</dbReference>
<dbReference type="PRO" id="PR:Q8IZK6"/>
<dbReference type="Proteomes" id="UP000005640">
    <property type="component" value="Chromosome 1"/>
</dbReference>
<dbReference type="RNAct" id="Q8IZK6">
    <property type="molecule type" value="protein"/>
</dbReference>
<dbReference type="Bgee" id="ENSG00000153898">
    <property type="expression patterns" value="Expressed in tibia and 126 other cell types or tissues"/>
</dbReference>
<dbReference type="ExpressionAtlas" id="Q8IZK6">
    <property type="expression patterns" value="baseline and differential"/>
</dbReference>
<dbReference type="GO" id="GO:0031902">
    <property type="term" value="C:late endosome membrane"/>
    <property type="evidence" value="ECO:0007669"/>
    <property type="project" value="UniProtKB-SubCell"/>
</dbReference>
<dbReference type="GO" id="GO:0005764">
    <property type="term" value="C:lysosome"/>
    <property type="evidence" value="ECO:0007669"/>
    <property type="project" value="UniProtKB-KW"/>
</dbReference>
<dbReference type="GO" id="GO:0016020">
    <property type="term" value="C:membrane"/>
    <property type="evidence" value="ECO:0000318"/>
    <property type="project" value="GO_Central"/>
</dbReference>
<dbReference type="GO" id="GO:0005886">
    <property type="term" value="C:plasma membrane"/>
    <property type="evidence" value="ECO:0000304"/>
    <property type="project" value="Reactome"/>
</dbReference>
<dbReference type="GO" id="GO:0055038">
    <property type="term" value="C:recycling endosome membrane"/>
    <property type="evidence" value="ECO:0007669"/>
    <property type="project" value="UniProtKB-SubCell"/>
</dbReference>
<dbReference type="GO" id="GO:0005262">
    <property type="term" value="F:calcium channel activity"/>
    <property type="evidence" value="ECO:0000304"/>
    <property type="project" value="Reactome"/>
</dbReference>
<dbReference type="GO" id="GO:0042802">
    <property type="term" value="F:identical protein binding"/>
    <property type="evidence" value="ECO:0007669"/>
    <property type="project" value="Ensembl"/>
</dbReference>
<dbReference type="GO" id="GO:0005381">
    <property type="term" value="F:iron ion transmembrane transporter activity"/>
    <property type="evidence" value="ECO:0000250"/>
    <property type="project" value="UniProtKB"/>
</dbReference>
<dbReference type="GO" id="GO:0072345">
    <property type="term" value="F:NAADP-sensitive calcium-release channel activity"/>
    <property type="evidence" value="ECO:0000318"/>
    <property type="project" value="GO_Central"/>
</dbReference>
<dbReference type="GO" id="GO:0002250">
    <property type="term" value="P:adaptive immune response"/>
    <property type="evidence" value="ECO:0007669"/>
    <property type="project" value="UniProtKB-KW"/>
</dbReference>
<dbReference type="GO" id="GO:0070588">
    <property type="term" value="P:calcium ion transmembrane transport"/>
    <property type="evidence" value="ECO:0000304"/>
    <property type="project" value="Reactome"/>
</dbReference>
<dbReference type="GO" id="GO:0045087">
    <property type="term" value="P:innate immune response"/>
    <property type="evidence" value="ECO:0007669"/>
    <property type="project" value="UniProtKB-KW"/>
</dbReference>
<dbReference type="GO" id="GO:1905517">
    <property type="term" value="P:macrophage migration"/>
    <property type="evidence" value="ECO:0007669"/>
    <property type="project" value="Ensembl"/>
</dbReference>
<dbReference type="GO" id="GO:1990266">
    <property type="term" value="P:neutrophil migration"/>
    <property type="evidence" value="ECO:0007669"/>
    <property type="project" value="Ensembl"/>
</dbReference>
<dbReference type="GO" id="GO:0071651">
    <property type="term" value="P:positive regulation of chemokine (C-C motif) ligand 5 production"/>
    <property type="evidence" value="ECO:0007669"/>
    <property type="project" value="Ensembl"/>
</dbReference>
<dbReference type="GO" id="GO:2000343">
    <property type="term" value="P:positive regulation of chemokine (C-X-C motif) ligand 2 production"/>
    <property type="evidence" value="ECO:0007669"/>
    <property type="project" value="Ensembl"/>
</dbReference>
<dbReference type="GO" id="GO:0071642">
    <property type="term" value="P:positive regulation of macrophage inflammatory protein 1 alpha production"/>
    <property type="evidence" value="ECO:0007669"/>
    <property type="project" value="Ensembl"/>
</dbReference>
<dbReference type="GO" id="GO:0071639">
    <property type="term" value="P:positive regulation of monocyte chemotactic protein-1 production"/>
    <property type="evidence" value="ECO:0007669"/>
    <property type="project" value="Ensembl"/>
</dbReference>
<dbReference type="GO" id="GO:0015031">
    <property type="term" value="P:protein transport"/>
    <property type="evidence" value="ECO:0007669"/>
    <property type="project" value="UniProtKB-KW"/>
</dbReference>
<dbReference type="CDD" id="cd21071">
    <property type="entry name" value="ELD_TRPML2"/>
    <property type="match status" value="1"/>
</dbReference>
<dbReference type="FunFam" id="1.10.287.70:FF:000033">
    <property type="entry name" value="Mucolipin 1"/>
    <property type="match status" value="1"/>
</dbReference>
<dbReference type="Gene3D" id="1.10.287.70">
    <property type="match status" value="1"/>
</dbReference>
<dbReference type="InterPro" id="IPR049134">
    <property type="entry name" value="MCLN_ECD"/>
</dbReference>
<dbReference type="InterPro" id="IPR039031">
    <property type="entry name" value="Mucolipin"/>
</dbReference>
<dbReference type="InterPro" id="IPR013122">
    <property type="entry name" value="PKD1_2_channel"/>
</dbReference>
<dbReference type="PANTHER" id="PTHR12127">
    <property type="entry name" value="MUCOLIPIN"/>
    <property type="match status" value="1"/>
</dbReference>
<dbReference type="PANTHER" id="PTHR12127:SF4">
    <property type="entry name" value="MUCOLIPIN-2"/>
    <property type="match status" value="1"/>
</dbReference>
<dbReference type="Pfam" id="PF21381">
    <property type="entry name" value="MCLN_ECD"/>
    <property type="match status" value="1"/>
</dbReference>
<dbReference type="Pfam" id="PF08016">
    <property type="entry name" value="PKD_channel"/>
    <property type="match status" value="1"/>
</dbReference>
<reference key="1">
    <citation type="journal article" date="2002" name="Proc. Natl. Acad. Sci. U.S.A.">
        <title>Mutations in Mcoln3 associated with deafness and pigmentation defects in varitint-waddler (Va) mice.</title>
        <authorList>
            <person name="Di Palma F."/>
            <person name="Belyantseva I.A."/>
            <person name="Kim H.J."/>
            <person name="Vogt T.F."/>
            <person name="Kachar B."/>
            <person name="Noben-Trauth K."/>
        </authorList>
    </citation>
    <scope>NUCLEOTIDE SEQUENCE [MRNA] (ISOFORM 2)</scope>
</reference>
<reference key="2">
    <citation type="journal article" date="2006" name="Nature">
        <title>The DNA sequence and biological annotation of human chromosome 1.</title>
        <authorList>
            <person name="Gregory S.G."/>
            <person name="Barlow K.F."/>
            <person name="McLay K.E."/>
            <person name="Kaul R."/>
            <person name="Swarbreck D."/>
            <person name="Dunham A."/>
            <person name="Scott C.E."/>
            <person name="Howe K.L."/>
            <person name="Woodfine K."/>
            <person name="Spencer C.C.A."/>
            <person name="Jones M.C."/>
            <person name="Gillson C."/>
            <person name="Searle S."/>
            <person name="Zhou Y."/>
            <person name="Kokocinski F."/>
            <person name="McDonald L."/>
            <person name="Evans R."/>
            <person name="Phillips K."/>
            <person name="Atkinson A."/>
            <person name="Cooper R."/>
            <person name="Jones C."/>
            <person name="Hall R.E."/>
            <person name="Andrews T.D."/>
            <person name="Lloyd C."/>
            <person name="Ainscough R."/>
            <person name="Almeida J.P."/>
            <person name="Ambrose K.D."/>
            <person name="Anderson F."/>
            <person name="Andrew R.W."/>
            <person name="Ashwell R.I.S."/>
            <person name="Aubin K."/>
            <person name="Babbage A.K."/>
            <person name="Bagguley C.L."/>
            <person name="Bailey J."/>
            <person name="Beasley H."/>
            <person name="Bethel G."/>
            <person name="Bird C.P."/>
            <person name="Bray-Allen S."/>
            <person name="Brown J.Y."/>
            <person name="Brown A.J."/>
            <person name="Buckley D."/>
            <person name="Burton J."/>
            <person name="Bye J."/>
            <person name="Carder C."/>
            <person name="Chapman J.C."/>
            <person name="Clark S.Y."/>
            <person name="Clarke G."/>
            <person name="Clee C."/>
            <person name="Cobley V."/>
            <person name="Collier R.E."/>
            <person name="Corby N."/>
            <person name="Coville G.J."/>
            <person name="Davies J."/>
            <person name="Deadman R."/>
            <person name="Dunn M."/>
            <person name="Earthrowl M."/>
            <person name="Ellington A.G."/>
            <person name="Errington H."/>
            <person name="Frankish A."/>
            <person name="Frankland J."/>
            <person name="French L."/>
            <person name="Garner P."/>
            <person name="Garnett J."/>
            <person name="Gay L."/>
            <person name="Ghori M.R.J."/>
            <person name="Gibson R."/>
            <person name="Gilby L.M."/>
            <person name="Gillett W."/>
            <person name="Glithero R.J."/>
            <person name="Grafham D.V."/>
            <person name="Griffiths C."/>
            <person name="Griffiths-Jones S."/>
            <person name="Grocock R."/>
            <person name="Hammond S."/>
            <person name="Harrison E.S.I."/>
            <person name="Hart E."/>
            <person name="Haugen E."/>
            <person name="Heath P.D."/>
            <person name="Holmes S."/>
            <person name="Holt K."/>
            <person name="Howden P.J."/>
            <person name="Hunt A.R."/>
            <person name="Hunt S.E."/>
            <person name="Hunter G."/>
            <person name="Isherwood J."/>
            <person name="James R."/>
            <person name="Johnson C."/>
            <person name="Johnson D."/>
            <person name="Joy A."/>
            <person name="Kay M."/>
            <person name="Kershaw J.K."/>
            <person name="Kibukawa M."/>
            <person name="Kimberley A.M."/>
            <person name="King A."/>
            <person name="Knights A.J."/>
            <person name="Lad H."/>
            <person name="Laird G."/>
            <person name="Lawlor S."/>
            <person name="Leongamornlert D.A."/>
            <person name="Lloyd D.M."/>
            <person name="Loveland J."/>
            <person name="Lovell J."/>
            <person name="Lush M.J."/>
            <person name="Lyne R."/>
            <person name="Martin S."/>
            <person name="Mashreghi-Mohammadi M."/>
            <person name="Matthews L."/>
            <person name="Matthews N.S.W."/>
            <person name="McLaren S."/>
            <person name="Milne S."/>
            <person name="Mistry S."/>
            <person name="Moore M.J.F."/>
            <person name="Nickerson T."/>
            <person name="O'Dell C.N."/>
            <person name="Oliver K."/>
            <person name="Palmeiri A."/>
            <person name="Palmer S.A."/>
            <person name="Parker A."/>
            <person name="Patel D."/>
            <person name="Pearce A.V."/>
            <person name="Peck A.I."/>
            <person name="Pelan S."/>
            <person name="Phelps K."/>
            <person name="Phillimore B.J."/>
            <person name="Plumb R."/>
            <person name="Rajan J."/>
            <person name="Raymond C."/>
            <person name="Rouse G."/>
            <person name="Saenphimmachak C."/>
            <person name="Sehra H.K."/>
            <person name="Sheridan E."/>
            <person name="Shownkeen R."/>
            <person name="Sims S."/>
            <person name="Skuce C.D."/>
            <person name="Smith M."/>
            <person name="Steward C."/>
            <person name="Subramanian S."/>
            <person name="Sycamore N."/>
            <person name="Tracey A."/>
            <person name="Tromans A."/>
            <person name="Van Helmond Z."/>
            <person name="Wall M."/>
            <person name="Wallis J.M."/>
            <person name="White S."/>
            <person name="Whitehead S.L."/>
            <person name="Wilkinson J.E."/>
            <person name="Willey D.L."/>
            <person name="Williams H."/>
            <person name="Wilming L."/>
            <person name="Wray P.W."/>
            <person name="Wu Z."/>
            <person name="Coulson A."/>
            <person name="Vaudin M."/>
            <person name="Sulston J.E."/>
            <person name="Durbin R.M."/>
            <person name="Hubbard T."/>
            <person name="Wooster R."/>
            <person name="Dunham I."/>
            <person name="Carter N.P."/>
            <person name="McVean G."/>
            <person name="Ross M.T."/>
            <person name="Harrow J."/>
            <person name="Olson M.V."/>
            <person name="Beck S."/>
            <person name="Rogers J."/>
            <person name="Bentley D.R."/>
        </authorList>
    </citation>
    <scope>NUCLEOTIDE SEQUENCE [LARGE SCALE GENOMIC DNA]</scope>
</reference>
<reference key="3">
    <citation type="submission" date="2005-09" db="EMBL/GenBank/DDBJ databases">
        <authorList>
            <person name="Mural R.J."/>
            <person name="Istrail S."/>
            <person name="Sutton G.G."/>
            <person name="Florea L."/>
            <person name="Halpern A.L."/>
            <person name="Mobarry C.M."/>
            <person name="Lippert R."/>
            <person name="Walenz B."/>
            <person name="Shatkay H."/>
            <person name="Dew I."/>
            <person name="Miller J.R."/>
            <person name="Flanigan M.J."/>
            <person name="Edwards N.J."/>
            <person name="Bolanos R."/>
            <person name="Fasulo D."/>
            <person name="Halldorsson B.V."/>
            <person name="Hannenhalli S."/>
            <person name="Turner R."/>
            <person name="Yooseph S."/>
            <person name="Lu F."/>
            <person name="Nusskern D.R."/>
            <person name="Shue B.C."/>
            <person name="Zheng X.H."/>
            <person name="Zhong F."/>
            <person name="Delcher A.L."/>
            <person name="Huson D.H."/>
            <person name="Kravitz S.A."/>
            <person name="Mouchard L."/>
            <person name="Reinert K."/>
            <person name="Remington K.A."/>
            <person name="Clark A.G."/>
            <person name="Waterman M.S."/>
            <person name="Eichler E.E."/>
            <person name="Adams M.D."/>
            <person name="Hunkapiller M.W."/>
            <person name="Myers E.W."/>
            <person name="Venter J.C."/>
        </authorList>
    </citation>
    <scope>NUCLEOTIDE SEQUENCE [LARGE SCALE GENOMIC DNA]</scope>
</reference>
<reference key="4">
    <citation type="journal article" date="2004" name="Genome Res.">
        <title>The status, quality, and expansion of the NIH full-length cDNA project: the Mammalian Gene Collection (MGC).</title>
        <authorList>
            <consortium name="The MGC Project Team"/>
        </authorList>
    </citation>
    <scope>NUCLEOTIDE SEQUENCE [LARGE SCALE MRNA] (ISOFORM 1)</scope>
</reference>
<reference key="5">
    <citation type="journal article" date="2004" name="Nat. Genet.">
        <title>Complete sequencing and characterization of 21,243 full-length human cDNAs.</title>
        <authorList>
            <person name="Ota T."/>
            <person name="Suzuki Y."/>
            <person name="Nishikawa T."/>
            <person name="Otsuki T."/>
            <person name="Sugiyama T."/>
            <person name="Irie R."/>
            <person name="Wakamatsu A."/>
            <person name="Hayashi K."/>
            <person name="Sato H."/>
            <person name="Nagai K."/>
            <person name="Kimura K."/>
            <person name="Makita H."/>
            <person name="Sekine M."/>
            <person name="Obayashi M."/>
            <person name="Nishi T."/>
            <person name="Shibahara T."/>
            <person name="Tanaka T."/>
            <person name="Ishii S."/>
            <person name="Yamamoto J."/>
            <person name="Saito K."/>
            <person name="Kawai Y."/>
            <person name="Isono Y."/>
            <person name="Nakamura Y."/>
            <person name="Nagahari K."/>
            <person name="Murakami K."/>
            <person name="Yasuda T."/>
            <person name="Iwayanagi T."/>
            <person name="Wagatsuma M."/>
            <person name="Shiratori A."/>
            <person name="Sudo H."/>
            <person name="Hosoiri T."/>
            <person name="Kaku Y."/>
            <person name="Kodaira H."/>
            <person name="Kondo H."/>
            <person name="Sugawara M."/>
            <person name="Takahashi M."/>
            <person name="Kanda K."/>
            <person name="Yokoi T."/>
            <person name="Furuya T."/>
            <person name="Kikkawa E."/>
            <person name="Omura Y."/>
            <person name="Abe K."/>
            <person name="Kamihara K."/>
            <person name="Katsuta N."/>
            <person name="Sato K."/>
            <person name="Tanikawa M."/>
            <person name="Yamazaki M."/>
            <person name="Ninomiya K."/>
            <person name="Ishibashi T."/>
            <person name="Yamashita H."/>
            <person name="Murakawa K."/>
            <person name="Fujimori K."/>
            <person name="Tanai H."/>
            <person name="Kimata M."/>
            <person name="Watanabe M."/>
            <person name="Hiraoka S."/>
            <person name="Chiba Y."/>
            <person name="Ishida S."/>
            <person name="Ono Y."/>
            <person name="Takiguchi S."/>
            <person name="Watanabe S."/>
            <person name="Yosida M."/>
            <person name="Hotuta T."/>
            <person name="Kusano J."/>
            <person name="Kanehori K."/>
            <person name="Takahashi-Fujii A."/>
            <person name="Hara H."/>
            <person name="Tanase T.-O."/>
            <person name="Nomura Y."/>
            <person name="Togiya S."/>
            <person name="Komai F."/>
            <person name="Hara R."/>
            <person name="Takeuchi K."/>
            <person name="Arita M."/>
            <person name="Imose N."/>
            <person name="Musashino K."/>
            <person name="Yuuki H."/>
            <person name="Oshima A."/>
            <person name="Sasaki N."/>
            <person name="Aotsuka S."/>
            <person name="Yoshikawa Y."/>
            <person name="Matsunawa H."/>
            <person name="Ichihara T."/>
            <person name="Shiohata N."/>
            <person name="Sano S."/>
            <person name="Moriya S."/>
            <person name="Momiyama H."/>
            <person name="Satoh N."/>
            <person name="Takami S."/>
            <person name="Terashima Y."/>
            <person name="Suzuki O."/>
            <person name="Nakagawa S."/>
            <person name="Senoh A."/>
            <person name="Mizoguchi H."/>
            <person name="Goto Y."/>
            <person name="Shimizu F."/>
            <person name="Wakebe H."/>
            <person name="Hishigaki H."/>
            <person name="Watanabe T."/>
            <person name="Sugiyama A."/>
            <person name="Takemoto M."/>
            <person name="Kawakami B."/>
            <person name="Yamazaki M."/>
            <person name="Watanabe K."/>
            <person name="Kumagai A."/>
            <person name="Itakura S."/>
            <person name="Fukuzumi Y."/>
            <person name="Fujimori Y."/>
            <person name="Komiyama M."/>
            <person name="Tashiro H."/>
            <person name="Tanigami A."/>
            <person name="Fujiwara T."/>
            <person name="Ono T."/>
            <person name="Yamada K."/>
            <person name="Fujii Y."/>
            <person name="Ozaki K."/>
            <person name="Hirao M."/>
            <person name="Ohmori Y."/>
            <person name="Kawabata A."/>
            <person name="Hikiji T."/>
            <person name="Kobatake N."/>
            <person name="Inagaki H."/>
            <person name="Ikema Y."/>
            <person name="Okamoto S."/>
            <person name="Okitani R."/>
            <person name="Kawakami T."/>
            <person name="Noguchi S."/>
            <person name="Itoh T."/>
            <person name="Shigeta K."/>
            <person name="Senba T."/>
            <person name="Matsumura K."/>
            <person name="Nakajima Y."/>
            <person name="Mizuno T."/>
            <person name="Morinaga M."/>
            <person name="Sasaki M."/>
            <person name="Togashi T."/>
            <person name="Oyama M."/>
            <person name="Hata H."/>
            <person name="Watanabe M."/>
            <person name="Komatsu T."/>
            <person name="Mizushima-Sugano J."/>
            <person name="Satoh T."/>
            <person name="Shirai Y."/>
            <person name="Takahashi Y."/>
            <person name="Nakagawa K."/>
            <person name="Okumura K."/>
            <person name="Nagase T."/>
            <person name="Nomura N."/>
            <person name="Kikuchi H."/>
            <person name="Masuho Y."/>
            <person name="Yamashita R."/>
            <person name="Nakai K."/>
            <person name="Yada T."/>
            <person name="Nakamura Y."/>
            <person name="Ohara O."/>
            <person name="Isogai T."/>
            <person name="Sugano S."/>
        </authorList>
    </citation>
    <scope>NUCLEOTIDE SEQUENCE [LARGE SCALE MRNA] OF 1-249 (ISOFORM 1)</scope>
    <source>
        <tissue>Uterus</tissue>
    </source>
</reference>
<reference key="6">
    <citation type="journal article" date="2007" name="Traffic">
        <title>Mucolipin-2 localizes to the Arf6-associated pathway and regulates recycling of GPI-APs.</title>
        <authorList>
            <person name="Karacsonyi C."/>
            <person name="Miguel A.S."/>
            <person name="Puertollano R."/>
        </authorList>
    </citation>
    <scope>FUNCTION</scope>
    <scope>SUBCELLULAR LOCATION</scope>
    <scope>MUTAGENESIS OF 463-ASP-ASP-464</scope>
</reference>
<reference key="7">
    <citation type="journal article" date="2010" name="J. Biol. Chem.">
        <title>Constitutive activity of the human TRPML2 channel induces cell degeneration.</title>
        <authorList>
            <person name="Lev S."/>
            <person name="Zeevi D.A."/>
            <person name="Frumkin A."/>
            <person name="Offen-Glasner V."/>
            <person name="Bach G."/>
            <person name="Minke B."/>
        </authorList>
    </citation>
    <scope>FUNCTION</scope>
    <scope>ACTIVITY REGULATION</scope>
    <scope>MUTAGENESIS OF ALA-424; PHE-457 AND 463-ASP-ASP-464</scope>
    <scope>TRANSPORTER ACTIVITY</scope>
</reference>
<reference key="8">
    <citation type="journal article" date="2010" name="J. Cell. Physiol.">
        <title>Functional multimerization of mucolipin channel proteins.</title>
        <authorList>
            <person name="Curcio-Morelli C."/>
            <person name="Zhang P."/>
            <person name="Venugopal B."/>
            <person name="Charles F.A."/>
            <person name="Browning M.F."/>
            <person name="Cantiello H.F."/>
            <person name="Slaugenhaupt S.A."/>
        </authorList>
    </citation>
    <scope>SUBUNIT</scope>
    <scope>FUNCTION</scope>
</reference>
<reference key="9">
    <citation type="journal article" date="2014" name="Traffic">
        <title>Cellular zinc levels are modulated by TRPML1-TMEM163 interaction.</title>
        <authorList>
            <person name="Cuajungco M.P."/>
            <person name="Basilio L.C."/>
            <person name="Silva J."/>
            <person name="Hart T."/>
            <person name="Tringali J."/>
            <person name="Chen C.C."/>
            <person name="Biel M."/>
            <person name="Grimm C."/>
        </authorList>
    </citation>
    <scope>INTERACTION WITH TMEM176A</scope>
</reference>
<feature type="chain" id="PRO_0000215365" description="Mucolipin-2">
    <location>
        <begin position="1"/>
        <end position="566"/>
    </location>
</feature>
<feature type="topological domain" description="Cytoplasmic" evidence="1">
    <location>
        <begin position="1"/>
        <end position="65"/>
    </location>
</feature>
<feature type="transmembrane region" description="Helical" evidence="1">
    <location>
        <begin position="66"/>
        <end position="86"/>
    </location>
</feature>
<feature type="topological domain" description="Extracellular" evidence="1">
    <location>
        <begin position="87"/>
        <end position="288"/>
    </location>
</feature>
<feature type="transmembrane region" description="Helical" evidence="1">
    <location>
        <begin position="289"/>
        <end position="309"/>
    </location>
</feature>
<feature type="topological domain" description="Cytoplasmic" evidence="1">
    <location>
        <begin position="310"/>
        <end position="346"/>
    </location>
</feature>
<feature type="transmembrane region" description="Helical" evidence="1">
    <location>
        <begin position="347"/>
        <end position="367"/>
    </location>
</feature>
<feature type="topological domain" description="Extracellular" evidence="1">
    <location>
        <begin position="368"/>
        <end position="376"/>
    </location>
</feature>
<feature type="transmembrane region" description="Helical" evidence="1">
    <location>
        <begin position="377"/>
        <end position="397"/>
    </location>
</feature>
<feature type="topological domain" description="Cytoplasmic" evidence="1">
    <location>
        <begin position="398"/>
        <end position="419"/>
    </location>
</feature>
<feature type="transmembrane region" description="Helical" evidence="1">
    <location>
        <begin position="420"/>
        <end position="440"/>
    </location>
</feature>
<feature type="topological domain" description="Extracellular" evidence="1">
    <location>
        <begin position="441"/>
        <end position="448"/>
    </location>
</feature>
<feature type="intramembrane region" description="Pore-forming" evidence="1">
    <location>
        <begin position="449"/>
        <end position="469"/>
    </location>
</feature>
<feature type="topological domain" description="Extracellular" evidence="1">
    <location>
        <begin position="470"/>
        <end position="480"/>
    </location>
</feature>
<feature type="transmembrane region" description="Helical" evidence="1">
    <location>
        <begin position="481"/>
        <end position="502"/>
    </location>
</feature>
<feature type="topological domain" description="Cytoplasmic" evidence="1">
    <location>
        <begin position="503"/>
        <end position="566"/>
    </location>
</feature>
<feature type="region of interest" description="Extracellular/lumenal pore loop" evidence="3">
    <location>
        <begin position="107"/>
        <end position="123"/>
    </location>
</feature>
<feature type="short sequence motif" description="Selectivity filter" evidence="1">
    <location>
        <begin position="461"/>
        <end position="464"/>
    </location>
</feature>
<feature type="disulfide bond" evidence="3">
    <location>
        <begin position="164"/>
        <end position="190"/>
    </location>
</feature>
<feature type="disulfide bond" evidence="3">
    <location>
        <begin position="243"/>
        <end position="274"/>
    </location>
</feature>
<feature type="splice variant" id="VSP_034642" description="In isoform 2." evidence="8">
    <location>
        <begin position="1"/>
        <end position="28"/>
    </location>
</feature>
<feature type="sequence variant" id="VAR_052394" description="In dbSNP:rs17117841.">
    <original>M</original>
    <variation>V</variation>
    <location>
        <position position="365"/>
    </location>
</feature>
<feature type="sequence variant" id="VAR_052395" description="In dbSNP:rs6704203.">
    <original>K</original>
    <variation>Q</variation>
    <location>
        <position position="370"/>
    </location>
</feature>
<feature type="mutagenesis site" description="Constitutive active Ca(2+) permeable and inward rectifying channel." evidence="6">
    <original>A</original>
    <variation>P</variation>
    <location>
        <position position="424"/>
    </location>
</feature>
<feature type="mutagenesis site" description="Does not effect current amplitude; possible effect on regulation." evidence="6">
    <original>F</original>
    <variation>L</variation>
    <location>
        <position position="457"/>
    </location>
</feature>
<feature type="mutagenesis site" description="Blocks channel activity. Decreases recycling of internalized CD59 to the cell surface." evidence="4 6">
    <original>DD</original>
    <variation>KK</variation>
    <location>
        <begin position="463"/>
        <end position="464"/>
    </location>
</feature>
<feature type="helix" evidence="11">
    <location>
        <begin position="93"/>
        <end position="105"/>
    </location>
</feature>
<feature type="strand" evidence="11">
    <location>
        <begin position="114"/>
        <end position="121"/>
    </location>
</feature>
<feature type="helix" evidence="11">
    <location>
        <begin position="124"/>
        <end position="139"/>
    </location>
</feature>
<feature type="helix" evidence="11">
    <location>
        <begin position="141"/>
        <end position="143"/>
    </location>
</feature>
<feature type="strand" evidence="11">
    <location>
        <begin position="147"/>
        <end position="152"/>
    </location>
</feature>
<feature type="strand" evidence="11">
    <location>
        <begin position="160"/>
        <end position="168"/>
    </location>
</feature>
<feature type="strand" evidence="11">
    <location>
        <begin position="186"/>
        <end position="193"/>
    </location>
</feature>
<feature type="helix" evidence="11">
    <location>
        <begin position="195"/>
        <end position="199"/>
    </location>
</feature>
<feature type="strand" evidence="12">
    <location>
        <begin position="200"/>
        <end position="202"/>
    </location>
</feature>
<feature type="helix" evidence="11">
    <location>
        <begin position="204"/>
        <end position="207"/>
    </location>
</feature>
<feature type="helix" evidence="11">
    <location>
        <begin position="209"/>
        <end position="211"/>
    </location>
</feature>
<feature type="turn" evidence="11">
    <location>
        <begin position="215"/>
        <end position="217"/>
    </location>
</feature>
<feature type="strand" evidence="11">
    <location>
        <begin position="218"/>
        <end position="231"/>
    </location>
</feature>
<feature type="helix" evidence="12">
    <location>
        <begin position="232"/>
        <end position="234"/>
    </location>
</feature>
<feature type="turn" evidence="12">
    <location>
        <begin position="235"/>
        <end position="237"/>
    </location>
</feature>
<feature type="strand" evidence="11">
    <location>
        <begin position="242"/>
        <end position="253"/>
    </location>
</feature>
<feature type="strand" evidence="11">
    <location>
        <begin position="261"/>
        <end position="272"/>
    </location>
</feature>
<gene>
    <name evidence="10" type="primary">MCOLN2</name>
</gene>
<evidence type="ECO:0000250" key="1">
    <source>
        <dbReference type="UniProtKB" id="F6RG56"/>
    </source>
</evidence>
<evidence type="ECO:0000250" key="2">
    <source>
        <dbReference type="UniProtKB" id="Q8K595"/>
    </source>
</evidence>
<evidence type="ECO:0000250" key="3">
    <source>
        <dbReference type="UniProtKB" id="Q9GZU1"/>
    </source>
</evidence>
<evidence type="ECO:0000269" key="4">
    <source>
    </source>
</evidence>
<evidence type="ECO:0000269" key="5">
    <source>
    </source>
</evidence>
<evidence type="ECO:0000269" key="6">
    <source>
    </source>
</evidence>
<evidence type="ECO:0000269" key="7">
    <source>
    </source>
</evidence>
<evidence type="ECO:0000303" key="8">
    <source>
    </source>
</evidence>
<evidence type="ECO:0000305" key="9"/>
<evidence type="ECO:0000312" key="10">
    <source>
        <dbReference type="HGNC" id="HGNC:13357"/>
    </source>
</evidence>
<evidence type="ECO:0007829" key="11">
    <source>
        <dbReference type="PDB" id="6HRR"/>
    </source>
</evidence>
<evidence type="ECO:0007829" key="12">
    <source>
        <dbReference type="PDB" id="6HRS"/>
    </source>
</evidence>
<proteinExistence type="evidence at protein level"/>
<keyword id="KW-0002">3D-structure</keyword>
<keyword id="KW-1064">Adaptive immunity</keyword>
<keyword id="KW-0025">Alternative splicing</keyword>
<keyword id="KW-0106">Calcium</keyword>
<keyword id="KW-0107">Calcium channel</keyword>
<keyword id="KW-0109">Calcium transport</keyword>
<keyword id="KW-1003">Cell membrane</keyword>
<keyword id="KW-1015">Disulfide bond</keyword>
<keyword id="KW-0967">Endosome</keyword>
<keyword id="KW-0391">Immunity</keyword>
<keyword id="KW-0399">Innate immunity</keyword>
<keyword id="KW-0407">Ion channel</keyword>
<keyword id="KW-0406">Ion transport</keyword>
<keyword id="KW-0458">Lysosome</keyword>
<keyword id="KW-0472">Membrane</keyword>
<keyword id="KW-0653">Protein transport</keyword>
<keyword id="KW-1267">Proteomics identification</keyword>
<keyword id="KW-1185">Reference proteome</keyword>
<keyword id="KW-0812">Transmembrane</keyword>
<keyword id="KW-1133">Transmembrane helix</keyword>
<keyword id="KW-0813">Transport</keyword>
<comment type="function">
    <text evidence="2 4 5 6 9">Nonselective cation channel probably playing a role in the regulation of membrane trafficking events. Acts as a Ca(2+)-permeable cation channel with inwardly rectifying activity (PubMed:19885840, PubMed:19940139). May activate ARF6 and be involved in the trafficking of GPI-anchored cargo proteins to the cell surface via the ARF6-regulated recycling pathway (PubMed:17662026). May play a role in immune processes. In adaptive immunity, TRPML2 and TRPML1 may play redundant roles in the function of the specialized lysosomes of B cells (By similarity). In the innate immune response, may play a role in the regulation of chemokine secretion and macrophage migration (By similarity). Through a possible and probably tissue-specific heteromerization with MCOLN1 may be at least in part involved in many lysosome-dependent cellular events (PubMed:19885840). Also functions as a Fe(2+) permeable channel (By similarity).</text>
</comment>
<comment type="catalytic activity">
    <reaction evidence="6">
        <text>Ca(2+)(in) = Ca(2+)(out)</text>
        <dbReference type="Rhea" id="RHEA:29671"/>
        <dbReference type="ChEBI" id="CHEBI:29108"/>
    </reaction>
</comment>
<comment type="catalytic activity">
    <reaction evidence="2">
        <text>Fe(2+)(in) = Fe(2+)(out)</text>
        <dbReference type="Rhea" id="RHEA:28486"/>
        <dbReference type="ChEBI" id="CHEBI:29033"/>
    </reaction>
</comment>
<comment type="activity regulation">
    <text evidence="6 9">Channel activity is reduced by low extracellular/lumenal pH level (PubMed:19940139).</text>
</comment>
<comment type="subunit">
    <text evidence="3 5 7">Forms homooligomeric complexes; probably tetrameric (By similarity). Can heterooligomerize with MCOLN1; heteromeric assemblies have different channel properties as compared to the respective homooligomers and may be tissue-specific (PubMed:19885840). Interacts with TMEM176A (PubMed:25130899).</text>
</comment>
<comment type="subcellular location">
    <subcellularLocation>
        <location evidence="4">Cell membrane</location>
        <topology evidence="1">Multi-pass membrane protein</topology>
    </subcellularLocation>
    <subcellularLocation>
        <location evidence="4">Late endosome membrane</location>
        <topology evidence="1">Multi-pass membrane protein</topology>
    </subcellularLocation>
    <subcellularLocation>
        <location evidence="4">Lysosome membrane</location>
        <topology evidence="1">Multi-pass membrane protein</topology>
    </subcellularLocation>
    <subcellularLocation>
        <location evidence="4">Recycling endosome membrane</location>
        <topology evidence="1">Multi-pass membrane protein</topology>
    </subcellularLocation>
    <text evidence="2">Localizes to recycling endosomes in activated macrophages and microglia.</text>
</comment>
<comment type="alternative products">
    <event type="alternative splicing"/>
    <isoform>
        <id>Q8IZK6-1</id>
        <name>1</name>
        <sequence type="displayed"/>
    </isoform>
    <isoform>
        <id>Q8IZK6-2</id>
        <name>2</name>
        <sequence type="described" ref="VSP_034642"/>
    </isoform>
</comment>
<comment type="domain">
    <text evidence="3">The most N-terminal extracellular/lumenal domain (referred to as I-II linker or polycystin-mucolipin domain) contributes to a structure with a four-fold rotational symmetry in a tetrameric assembly; the structure contains a central highly electronegative pore with a 14 A diameter. The pore is critical for Ca(2+) and pH regulation. The protruding structure formed by the I-II linkers may contain all the interaction sites with lipids and proteins in the endolysosomal lumen.</text>
</comment>
<comment type="similarity">
    <text evidence="9">Belongs to the transient receptor (TC 1.A.4) family. Polycystin subfamily. MCOLN2 sub-subfamily.</text>
</comment>
<comment type="sequence caution" evidence="9">
    <conflict type="erroneous termination">
        <sequence resource="EMBL-CDS" id="BAC04267"/>
    </conflict>
    <text>Truncated C-terminus.</text>
</comment>
<protein>
    <recommendedName>
        <fullName>Mucolipin-2</fullName>
    </recommendedName>
    <alternativeName>
        <fullName>Transient receptor potential channel mucolipin 2</fullName>
        <shortName>TRPML2</shortName>
    </alternativeName>
</protein>
<name>MCLN2_HUMAN</name>